<keyword id="KW-0044">Antibiotic</keyword>
<keyword id="KW-0929">Antimicrobial</keyword>
<keyword id="KW-0078">Bacteriocin</keyword>
<keyword id="KW-0425">Lantibiotic</keyword>
<keyword id="KW-0446">Lipid-binding</keyword>
<keyword id="KW-0964">Secreted</keyword>
<keyword id="KW-0883">Thioether bond</keyword>
<organism>
    <name type="scientific">Ruminococcus flavefaciens</name>
    <dbReference type="NCBI Taxonomy" id="1265"/>
    <lineage>
        <taxon>Bacteria</taxon>
        <taxon>Bacillati</taxon>
        <taxon>Bacillota</taxon>
        <taxon>Clostridia</taxon>
        <taxon>Eubacteriales</taxon>
        <taxon>Oscillospiraceae</taxon>
        <taxon>Ruminococcus</taxon>
    </lineage>
</organism>
<protein>
    <recommendedName>
        <fullName evidence="4">Lantibiotic Flvalpha.b</fullName>
    </recommendedName>
</protein>
<reference key="1">
    <citation type="journal article" date="2016" name="Cell Chem. Biol.">
        <title>Structural characterization and bioactivity analysis of the two-component lantibiotic Flv system from a ruminant bacterium.</title>
        <authorList>
            <person name="Zhao X."/>
            <person name="van der Donk W.A."/>
        </authorList>
    </citation>
    <scope>NUCLEOTIDE SEQUENCE [GENOMIC DNA]</scope>
    <source>
        <strain>FD-1</strain>
    </source>
</reference>
<accession>P0DQM2</accession>
<dbReference type="GO" id="GO:0005576">
    <property type="term" value="C:extracellular region"/>
    <property type="evidence" value="ECO:0007669"/>
    <property type="project" value="UniProtKB-SubCell"/>
</dbReference>
<dbReference type="GO" id="GO:0008289">
    <property type="term" value="F:lipid binding"/>
    <property type="evidence" value="ECO:0007669"/>
    <property type="project" value="UniProtKB-KW"/>
</dbReference>
<dbReference type="GO" id="GO:0005102">
    <property type="term" value="F:signaling receptor binding"/>
    <property type="evidence" value="ECO:0007669"/>
    <property type="project" value="UniProtKB-KW"/>
</dbReference>
<dbReference type="GO" id="GO:0042742">
    <property type="term" value="P:defense response to bacterium"/>
    <property type="evidence" value="ECO:0007669"/>
    <property type="project" value="UniProtKB-KW"/>
</dbReference>
<dbReference type="GO" id="GO:0031640">
    <property type="term" value="P:killing of cells of another organism"/>
    <property type="evidence" value="ECO:0007669"/>
    <property type="project" value="UniProtKB-KW"/>
</dbReference>
<dbReference type="NCBIfam" id="NF000539">
    <property type="entry name" value="plantaricin"/>
    <property type="match status" value="1"/>
</dbReference>
<evidence type="ECO:0000250" key="1">
    <source>
        <dbReference type="UniProtKB" id="H2A7G5"/>
    </source>
</evidence>
<evidence type="ECO:0000250" key="2">
    <source>
        <dbReference type="UniProtKB" id="P0DQM1"/>
    </source>
</evidence>
<evidence type="ECO:0000250" key="3">
    <source>
        <dbReference type="UniProtKB" id="P86475"/>
    </source>
</evidence>
<evidence type="ECO:0000303" key="4">
    <source>
    </source>
</evidence>
<evidence type="ECO:0000305" key="5">
    <source>
    </source>
</evidence>
<name>LAN1B_RUMFL</name>
<feature type="propeptide" id="PRO_0000450390" description="Cleaved by FlvT" evidence="5">
    <location>
        <begin position="1"/>
        <end position="38"/>
    </location>
</feature>
<feature type="peptide" id="PRO_0000450391" description="Lantibiotic Flvalpha.b" evidence="5">
    <location>
        <begin position="39"/>
        <end position="80"/>
    </location>
</feature>
<feature type="modified residue" description="2,3-didehydrobutyrine; by FlvM1" evidence="2">
    <location>
        <position position="43"/>
    </location>
</feature>
<feature type="modified residue" description="2,3-didehydrobutyrine; by FlvM1" evidence="2">
    <location>
        <position position="47"/>
    </location>
</feature>
<feature type="cross-link" description="Beta-methyllanthionine (Thr-Cys); by FlvM1" evidence="2">
    <location>
        <begin position="52"/>
        <end position="55"/>
    </location>
</feature>
<feature type="cross-link" description="Lanthionine (Ser-Cys); by FlvM1" evidence="2">
    <location>
        <begin position="58"/>
        <end position="68"/>
    </location>
</feature>
<feature type="cross-link" description="Beta-methyllanthionine (Thr-Cys); by FlvM1" evidence="2">
    <location>
        <begin position="69"/>
        <end position="74"/>
    </location>
</feature>
<feature type="cross-link" description="Beta-methyllanthionine (Thr-Cys); by FlvM1" evidence="2">
    <location>
        <begin position="71"/>
        <end position="78"/>
    </location>
</feature>
<gene>
    <name evidence="4" type="primary">FlvA1.B</name>
</gene>
<sequence length="80" mass="8458">MNKNPIYRSEEEAKNIACGNVAAELDENSQALDAINGAGWKQTIVCTIAQGTVGCLVSYGLGNGGYCCTYTVECSKTCNK</sequence>
<comment type="function">
    <text evidence="2 3">Lanthionine-containing peptide antibiotic (lantibiotic) only active on Gram-positive bacteria in synergy with Flvbeta peptides, which are encoded by the same operon than Flvalpha.a. Shows antibacterial activity in synergy with Flvbeta.b, Flvbeta.c, Flvbeta.e and Flvbeta.g. Does not show antibacterial activity when tested with Flvbeta.a, Flvbeta.d, Flvbeta.f and Flvbeta.h (By similarity). The bactericidal activity of lantibiotics is based on depolarization of energized bacterial cytoplasmic membranes, initiated by the formation of aqueous transmembrane pores (By similarity).</text>
</comment>
<comment type="subcellular location">
    <subcellularLocation>
        <location evidence="2">Secreted</location>
    </subcellularLocation>
</comment>
<comment type="PTM">
    <text evidence="2">The lanthionine formed by Ser-58 and Cys-68 forms a putative lipid II binding motif.</text>
</comment>
<comment type="PTM">
    <text evidence="1 2">Maturation of FlvA1 peptides involves the enzymatic conversion of Thr, and Ser into dehydrated AA and the formation of thioether bonds with cysteines. Modifications are processed by the flavecin synthetase FlvM1 (By similarity). This is followed by membrane translocation and cleavage of the modified precursor (By similarity).</text>
</comment>
<comment type="PTM">
    <text evidence="2">Contains DL-lanthionine and DL-beta-methyllanthionine, when coepressed in E.coli with the flavecin synthetase FlvM1.</text>
</comment>
<proteinExistence type="inferred from homology"/>